<accession>B7LJV2</accession>
<feature type="chain" id="PRO_1000188525" description="Ribosomal RNA large subunit methyltransferase F">
    <location>
        <begin position="1"/>
        <end position="308"/>
    </location>
</feature>
<reference key="1">
    <citation type="journal article" date="2009" name="PLoS Genet.">
        <title>Organised genome dynamics in the Escherichia coli species results in highly diverse adaptive paths.</title>
        <authorList>
            <person name="Touchon M."/>
            <person name="Hoede C."/>
            <person name="Tenaillon O."/>
            <person name="Barbe V."/>
            <person name="Baeriswyl S."/>
            <person name="Bidet P."/>
            <person name="Bingen E."/>
            <person name="Bonacorsi S."/>
            <person name="Bouchier C."/>
            <person name="Bouvet O."/>
            <person name="Calteau A."/>
            <person name="Chiapello H."/>
            <person name="Clermont O."/>
            <person name="Cruveiller S."/>
            <person name="Danchin A."/>
            <person name="Diard M."/>
            <person name="Dossat C."/>
            <person name="Karoui M.E."/>
            <person name="Frapy E."/>
            <person name="Garry L."/>
            <person name="Ghigo J.M."/>
            <person name="Gilles A.M."/>
            <person name="Johnson J."/>
            <person name="Le Bouguenec C."/>
            <person name="Lescat M."/>
            <person name="Mangenot S."/>
            <person name="Martinez-Jehanne V."/>
            <person name="Matic I."/>
            <person name="Nassif X."/>
            <person name="Oztas S."/>
            <person name="Petit M.A."/>
            <person name="Pichon C."/>
            <person name="Rouy Z."/>
            <person name="Ruf C.S."/>
            <person name="Schneider D."/>
            <person name="Tourret J."/>
            <person name="Vacherie B."/>
            <person name="Vallenet D."/>
            <person name="Medigue C."/>
            <person name="Rocha E.P.C."/>
            <person name="Denamur E."/>
        </authorList>
    </citation>
    <scope>NUCLEOTIDE SEQUENCE [LARGE SCALE GENOMIC DNA]</scope>
    <source>
        <strain>ATCC 35469 / DSM 13698 / BCRC 15582 / CCUG 18766 / IAM 14443 / JCM 21226 / LMG 7866 / NBRC 102419 / NCTC 12128 / CDC 0568-73</strain>
    </source>
</reference>
<evidence type="ECO:0000255" key="1">
    <source>
        <dbReference type="HAMAP-Rule" id="MF_01848"/>
    </source>
</evidence>
<sequence>MSAQKPGLHPRNRHHSRYDLATLCQVNPELKQFLTLTPAGEQSVDFANPLAVKALNKALLAHFYAVANWDIPDGFLCPPVPGRADYIHHLADLLAEASGTIPARASILDIGVGANCIYPLIGVHEYGWRFTGSETSSQALSSAQAIISANPGLNRAIRLRRQKESGAIFNGIIHKNEQYDATLCNPPFHDSAAAARAGSERKRRNLGLNKDDALNFGGQQQELWCEGGEVTFIKKMIEESKGFAKQVMWFTSLVSRGENLPPLYRALTDVGAVKVVKKEMAQGQKQSRFIAWTFMNDEQRRRFVNRQR</sequence>
<dbReference type="EC" id="2.1.1.181" evidence="1"/>
<dbReference type="EMBL" id="CU928158">
    <property type="protein sequence ID" value="CAQ89802.1"/>
    <property type="molecule type" value="Genomic_DNA"/>
</dbReference>
<dbReference type="SMR" id="B7LJV2"/>
<dbReference type="KEGG" id="efe:EFER_2301"/>
<dbReference type="HOGENOM" id="CLU_027534_3_0_6"/>
<dbReference type="Proteomes" id="UP000000745">
    <property type="component" value="Chromosome"/>
</dbReference>
<dbReference type="GO" id="GO:0005737">
    <property type="term" value="C:cytoplasm"/>
    <property type="evidence" value="ECO:0007669"/>
    <property type="project" value="UniProtKB-SubCell"/>
</dbReference>
<dbReference type="GO" id="GO:0052907">
    <property type="term" value="F:23S rRNA (adenine(1618)-N(6))-methyltransferase activity"/>
    <property type="evidence" value="ECO:0007669"/>
    <property type="project" value="UniProtKB-EC"/>
</dbReference>
<dbReference type="GO" id="GO:0070475">
    <property type="term" value="P:rRNA base methylation"/>
    <property type="evidence" value="ECO:0007669"/>
    <property type="project" value="TreeGrafter"/>
</dbReference>
<dbReference type="FunFam" id="3.40.50.150:FF:000045">
    <property type="entry name" value="Ribosomal RNA large subunit methyltransferase F"/>
    <property type="match status" value="1"/>
</dbReference>
<dbReference type="Gene3D" id="3.40.50.150">
    <property type="entry name" value="Vaccinia Virus protein VP39"/>
    <property type="match status" value="1"/>
</dbReference>
<dbReference type="HAMAP" id="MF_01848">
    <property type="entry name" value="23SrRNA_methyltr_F"/>
    <property type="match status" value="1"/>
</dbReference>
<dbReference type="InterPro" id="IPR010286">
    <property type="entry name" value="METTL16/RlmF"/>
</dbReference>
<dbReference type="InterPro" id="IPR016909">
    <property type="entry name" value="rRNA_lsu_MeTfrase_F"/>
</dbReference>
<dbReference type="InterPro" id="IPR029063">
    <property type="entry name" value="SAM-dependent_MTases_sf"/>
</dbReference>
<dbReference type="NCBIfam" id="NF008725">
    <property type="entry name" value="PRK11727.1"/>
    <property type="match status" value="1"/>
</dbReference>
<dbReference type="PANTHER" id="PTHR13393:SF0">
    <property type="entry name" value="RNA N6-ADENOSINE-METHYLTRANSFERASE METTL16"/>
    <property type="match status" value="1"/>
</dbReference>
<dbReference type="PANTHER" id="PTHR13393">
    <property type="entry name" value="SAM-DEPENDENT METHYLTRANSFERASE"/>
    <property type="match status" value="1"/>
</dbReference>
<dbReference type="Pfam" id="PF05971">
    <property type="entry name" value="Methyltransf_10"/>
    <property type="match status" value="1"/>
</dbReference>
<dbReference type="PIRSF" id="PIRSF029038">
    <property type="entry name" value="Mtase_YbiN_prd"/>
    <property type="match status" value="1"/>
</dbReference>
<dbReference type="SUPFAM" id="SSF53335">
    <property type="entry name" value="S-adenosyl-L-methionine-dependent methyltransferases"/>
    <property type="match status" value="1"/>
</dbReference>
<proteinExistence type="inferred from homology"/>
<protein>
    <recommendedName>
        <fullName evidence="1">Ribosomal RNA large subunit methyltransferase F</fullName>
        <ecNumber evidence="1">2.1.1.181</ecNumber>
    </recommendedName>
    <alternativeName>
        <fullName evidence="1">23S rRNA mA1618 methyltransferase</fullName>
    </alternativeName>
    <alternativeName>
        <fullName evidence="1">rRNA adenine N-6-methyltransferase</fullName>
    </alternativeName>
</protein>
<name>RLMF_ESCF3</name>
<comment type="function">
    <text evidence="1">Specifically methylates the adenine in position 1618 of 23S rRNA.</text>
</comment>
<comment type="catalytic activity">
    <reaction evidence="1">
        <text>adenosine(1618) in 23S rRNA + S-adenosyl-L-methionine = N(6)-methyladenosine(1618) in 23S rRNA + S-adenosyl-L-homocysteine + H(+)</text>
        <dbReference type="Rhea" id="RHEA:16497"/>
        <dbReference type="Rhea" id="RHEA-COMP:10229"/>
        <dbReference type="Rhea" id="RHEA-COMP:10231"/>
        <dbReference type="ChEBI" id="CHEBI:15378"/>
        <dbReference type="ChEBI" id="CHEBI:57856"/>
        <dbReference type="ChEBI" id="CHEBI:59789"/>
        <dbReference type="ChEBI" id="CHEBI:74411"/>
        <dbReference type="ChEBI" id="CHEBI:74449"/>
        <dbReference type="EC" id="2.1.1.181"/>
    </reaction>
</comment>
<comment type="subcellular location">
    <subcellularLocation>
        <location evidence="1">Cytoplasm</location>
    </subcellularLocation>
</comment>
<comment type="similarity">
    <text evidence="1">Belongs to the methyltransferase superfamily. METTL16/RlmF family.</text>
</comment>
<keyword id="KW-0963">Cytoplasm</keyword>
<keyword id="KW-0489">Methyltransferase</keyword>
<keyword id="KW-0698">rRNA processing</keyword>
<keyword id="KW-0949">S-adenosyl-L-methionine</keyword>
<keyword id="KW-0808">Transferase</keyword>
<organism>
    <name type="scientific">Escherichia fergusonii (strain ATCC 35469 / DSM 13698 / CCUG 18766 / IAM 14443 / JCM 21226 / LMG 7866 / NBRC 102419 / NCTC 12128 / CDC 0568-73)</name>
    <dbReference type="NCBI Taxonomy" id="585054"/>
    <lineage>
        <taxon>Bacteria</taxon>
        <taxon>Pseudomonadati</taxon>
        <taxon>Pseudomonadota</taxon>
        <taxon>Gammaproteobacteria</taxon>
        <taxon>Enterobacterales</taxon>
        <taxon>Enterobacteriaceae</taxon>
        <taxon>Escherichia</taxon>
    </lineage>
</organism>
<gene>
    <name evidence="1" type="primary">rlmF</name>
    <name type="ordered locus">EFER_2301</name>
</gene>